<accession>Q18CE8</accession>
<feature type="chain" id="PRO_1000120938" description="Large ribosomal subunit protein uL10">
    <location>
        <begin position="1"/>
        <end position="168"/>
    </location>
</feature>
<proteinExistence type="inferred from homology"/>
<comment type="function">
    <text evidence="1">Forms part of the ribosomal stalk, playing a central role in the interaction of the ribosome with GTP-bound translation factors.</text>
</comment>
<comment type="subunit">
    <text evidence="1">Part of the ribosomal stalk of the 50S ribosomal subunit. The N-terminus interacts with L11 and the large rRNA to form the base of the stalk. The C-terminus forms an elongated spine to which L12 dimers bind in a sequential fashion forming a multimeric L10(L12)X complex.</text>
</comment>
<comment type="similarity">
    <text evidence="1">Belongs to the universal ribosomal protein uL10 family.</text>
</comment>
<dbReference type="EMBL" id="AM180355">
    <property type="protein sequence ID" value="CAJ66878.1"/>
    <property type="molecule type" value="Genomic_DNA"/>
</dbReference>
<dbReference type="RefSeq" id="WP_003421187.1">
    <property type="nucleotide sequence ID" value="NZ_JAUPES010000049.1"/>
</dbReference>
<dbReference type="RefSeq" id="YP_001086527.1">
    <property type="nucleotide sequence ID" value="NC_009089.1"/>
</dbReference>
<dbReference type="SMR" id="Q18CE8"/>
<dbReference type="STRING" id="272563.CD630_00630"/>
<dbReference type="EnsemblBacteria" id="CAJ66878">
    <property type="protein sequence ID" value="CAJ66878"/>
    <property type="gene ID" value="CD630_00630"/>
</dbReference>
<dbReference type="GeneID" id="66352561"/>
<dbReference type="KEGG" id="cdf:CD630_00630"/>
<dbReference type="KEGG" id="pdc:CDIF630_00129"/>
<dbReference type="PATRIC" id="fig|272563.120.peg.69"/>
<dbReference type="eggNOG" id="COG0244">
    <property type="taxonomic scope" value="Bacteria"/>
</dbReference>
<dbReference type="OrthoDB" id="9808307at2"/>
<dbReference type="PhylomeDB" id="Q18CE8"/>
<dbReference type="BioCyc" id="PDIF272563:G12WB-117-MONOMER"/>
<dbReference type="Proteomes" id="UP000001978">
    <property type="component" value="Chromosome"/>
</dbReference>
<dbReference type="GO" id="GO:0015934">
    <property type="term" value="C:large ribosomal subunit"/>
    <property type="evidence" value="ECO:0007669"/>
    <property type="project" value="InterPro"/>
</dbReference>
<dbReference type="GO" id="GO:0070180">
    <property type="term" value="F:large ribosomal subunit rRNA binding"/>
    <property type="evidence" value="ECO:0007669"/>
    <property type="project" value="UniProtKB-UniRule"/>
</dbReference>
<dbReference type="GO" id="GO:0003735">
    <property type="term" value="F:structural constituent of ribosome"/>
    <property type="evidence" value="ECO:0007669"/>
    <property type="project" value="InterPro"/>
</dbReference>
<dbReference type="GO" id="GO:0006412">
    <property type="term" value="P:translation"/>
    <property type="evidence" value="ECO:0007669"/>
    <property type="project" value="UniProtKB-UniRule"/>
</dbReference>
<dbReference type="CDD" id="cd05797">
    <property type="entry name" value="Ribosomal_L10"/>
    <property type="match status" value="1"/>
</dbReference>
<dbReference type="Gene3D" id="3.30.70.1730">
    <property type="match status" value="1"/>
</dbReference>
<dbReference type="Gene3D" id="6.10.250.290">
    <property type="match status" value="1"/>
</dbReference>
<dbReference type="HAMAP" id="MF_00362">
    <property type="entry name" value="Ribosomal_uL10"/>
    <property type="match status" value="1"/>
</dbReference>
<dbReference type="InterPro" id="IPR001790">
    <property type="entry name" value="Ribosomal_uL10"/>
</dbReference>
<dbReference type="InterPro" id="IPR043141">
    <property type="entry name" value="Ribosomal_uL10-like_sf"/>
</dbReference>
<dbReference type="InterPro" id="IPR022973">
    <property type="entry name" value="Ribosomal_uL10_bac"/>
</dbReference>
<dbReference type="InterPro" id="IPR047865">
    <property type="entry name" value="Ribosomal_uL10_bac_type"/>
</dbReference>
<dbReference type="InterPro" id="IPR002363">
    <property type="entry name" value="Ribosomal_uL10_CS_bac"/>
</dbReference>
<dbReference type="NCBIfam" id="NF000955">
    <property type="entry name" value="PRK00099.1-1"/>
    <property type="match status" value="1"/>
</dbReference>
<dbReference type="PANTHER" id="PTHR11560">
    <property type="entry name" value="39S RIBOSOMAL PROTEIN L10, MITOCHONDRIAL"/>
    <property type="match status" value="1"/>
</dbReference>
<dbReference type="Pfam" id="PF00466">
    <property type="entry name" value="Ribosomal_L10"/>
    <property type="match status" value="1"/>
</dbReference>
<dbReference type="SUPFAM" id="SSF160369">
    <property type="entry name" value="Ribosomal protein L10-like"/>
    <property type="match status" value="1"/>
</dbReference>
<dbReference type="PROSITE" id="PS01109">
    <property type="entry name" value="RIBOSOMAL_L10"/>
    <property type="match status" value="1"/>
</dbReference>
<name>RL10_CLOD6</name>
<evidence type="ECO:0000255" key="1">
    <source>
        <dbReference type="HAMAP-Rule" id="MF_00362"/>
    </source>
</evidence>
<evidence type="ECO:0000305" key="2"/>
<gene>
    <name evidence="1" type="primary">rplJ</name>
    <name type="ordered locus">CD630_00630</name>
</gene>
<organism>
    <name type="scientific">Clostridioides difficile (strain 630)</name>
    <name type="common">Peptoclostridium difficile</name>
    <dbReference type="NCBI Taxonomy" id="272563"/>
    <lineage>
        <taxon>Bacteria</taxon>
        <taxon>Bacillati</taxon>
        <taxon>Bacillota</taxon>
        <taxon>Clostridia</taxon>
        <taxon>Peptostreptococcales</taxon>
        <taxon>Peptostreptococcaceae</taxon>
        <taxon>Clostridioides</taxon>
    </lineage>
</organism>
<keyword id="KW-1185">Reference proteome</keyword>
<keyword id="KW-0687">Ribonucleoprotein</keyword>
<keyword id="KW-0689">Ribosomal protein</keyword>
<keyword id="KW-0694">RNA-binding</keyword>
<keyword id="KW-0699">rRNA-binding</keyword>
<protein>
    <recommendedName>
        <fullName evidence="1">Large ribosomal subunit protein uL10</fullName>
    </recommendedName>
    <alternativeName>
        <fullName evidence="2">50S ribosomal protein L10</fullName>
    </alternativeName>
</protein>
<sequence>MRKAIEIKSEVVSEIVEKLQKSSAAVVVDYKGLTVEEVTELRKQMREAGVDYKVYKNTLVRRAAKEVGIEQFNDELLVGTNAIAFGYDDPVAPARILKGFMDSHPKMKLKMGIVEGAFYDESKIVEMANIPSREVLIAKLLGSLKAPVSNFAYLIDAIAKKAEGQEEA</sequence>
<reference key="1">
    <citation type="journal article" date="2006" name="Nat. Genet.">
        <title>The multidrug-resistant human pathogen Clostridium difficile has a highly mobile, mosaic genome.</title>
        <authorList>
            <person name="Sebaihia M."/>
            <person name="Wren B.W."/>
            <person name="Mullany P."/>
            <person name="Fairweather N.F."/>
            <person name="Minton N."/>
            <person name="Stabler R."/>
            <person name="Thomson N.R."/>
            <person name="Roberts A.P."/>
            <person name="Cerdeno-Tarraga A.M."/>
            <person name="Wang H."/>
            <person name="Holden M.T.G."/>
            <person name="Wright A."/>
            <person name="Churcher C."/>
            <person name="Quail M.A."/>
            <person name="Baker S."/>
            <person name="Bason N."/>
            <person name="Brooks K."/>
            <person name="Chillingworth T."/>
            <person name="Cronin A."/>
            <person name="Davis P."/>
            <person name="Dowd L."/>
            <person name="Fraser A."/>
            <person name="Feltwell T."/>
            <person name="Hance Z."/>
            <person name="Holroyd S."/>
            <person name="Jagels K."/>
            <person name="Moule S."/>
            <person name="Mungall K."/>
            <person name="Price C."/>
            <person name="Rabbinowitsch E."/>
            <person name="Sharp S."/>
            <person name="Simmonds M."/>
            <person name="Stevens K."/>
            <person name="Unwin L."/>
            <person name="Whithead S."/>
            <person name="Dupuy B."/>
            <person name="Dougan G."/>
            <person name="Barrell B."/>
            <person name="Parkhill J."/>
        </authorList>
    </citation>
    <scope>NUCLEOTIDE SEQUENCE [LARGE SCALE GENOMIC DNA]</scope>
    <source>
        <strain>630</strain>
    </source>
</reference>